<dbReference type="EMBL" id="L19201">
    <property type="protein sequence ID" value="AAB03025.1"/>
    <property type="molecule type" value="Genomic_DNA"/>
</dbReference>
<dbReference type="EMBL" id="U00096">
    <property type="protein sequence ID" value="AAD13454.1"/>
    <property type="molecule type" value="Genomic_DNA"/>
</dbReference>
<dbReference type="EMBL" id="AP009048">
    <property type="protein sequence ID" value="BAE77417.1"/>
    <property type="molecule type" value="Genomic_DNA"/>
</dbReference>
<dbReference type="PIR" id="S40836">
    <property type="entry name" value="S40836"/>
</dbReference>
<dbReference type="RefSeq" id="NP_418328.1">
    <property type="nucleotide sequence ID" value="NC_000913.3"/>
</dbReference>
<dbReference type="RefSeq" id="WP_000829013.1">
    <property type="nucleotide sequence ID" value="NZ_STEB01000017.1"/>
</dbReference>
<dbReference type="SMR" id="P0AEL0"/>
<dbReference type="BioGRID" id="4262641">
    <property type="interactions" value="47"/>
</dbReference>
<dbReference type="ComplexPortal" id="CPX-6029">
    <property type="entry name" value="Formate dehydrogenase Z complex"/>
</dbReference>
<dbReference type="FunCoup" id="P0AEL0">
    <property type="interactions" value="162"/>
</dbReference>
<dbReference type="IntAct" id="P0AEL0">
    <property type="interactions" value="1"/>
</dbReference>
<dbReference type="STRING" id="511145.b3892"/>
<dbReference type="jPOST" id="P0AEL0"/>
<dbReference type="PaxDb" id="511145-b3892"/>
<dbReference type="EnsemblBacteria" id="AAD13454">
    <property type="protein sequence ID" value="AAD13454"/>
    <property type="gene ID" value="b3892"/>
</dbReference>
<dbReference type="GeneID" id="93778046"/>
<dbReference type="GeneID" id="948383"/>
<dbReference type="KEGG" id="ecj:JW3863"/>
<dbReference type="KEGG" id="eco:b3892"/>
<dbReference type="KEGG" id="ecoc:C3026_21040"/>
<dbReference type="PATRIC" id="fig|1411691.4.peg.2817"/>
<dbReference type="EchoBASE" id="EB1802"/>
<dbReference type="eggNOG" id="COG2864">
    <property type="taxonomic scope" value="Bacteria"/>
</dbReference>
<dbReference type="HOGENOM" id="CLU_091368_1_1_6"/>
<dbReference type="InParanoid" id="P0AEL0"/>
<dbReference type="OMA" id="DIVWAKN"/>
<dbReference type="OrthoDB" id="9790598at2"/>
<dbReference type="PhylomeDB" id="P0AEL0"/>
<dbReference type="BioCyc" id="EcoCyc:FDOI-MONOMER"/>
<dbReference type="BioCyc" id="MetaCyc:FDOI-MONOMER"/>
<dbReference type="PRO" id="PR:P0AEL0"/>
<dbReference type="Proteomes" id="UP000000625">
    <property type="component" value="Chromosome"/>
</dbReference>
<dbReference type="GO" id="GO:0009326">
    <property type="term" value="C:formate dehydrogenase complex"/>
    <property type="evidence" value="ECO:0000314"/>
    <property type="project" value="EcoCyc"/>
</dbReference>
<dbReference type="GO" id="GO:0016020">
    <property type="term" value="C:membrane"/>
    <property type="evidence" value="ECO:0000250"/>
    <property type="project" value="ComplexPortal"/>
</dbReference>
<dbReference type="GO" id="GO:0005886">
    <property type="term" value="C:plasma membrane"/>
    <property type="evidence" value="ECO:0000314"/>
    <property type="project" value="EcoCyc"/>
</dbReference>
<dbReference type="GO" id="GO:0009055">
    <property type="term" value="F:electron transfer activity"/>
    <property type="evidence" value="ECO:0007669"/>
    <property type="project" value="InterPro"/>
</dbReference>
<dbReference type="GO" id="GO:0008863">
    <property type="term" value="F:formate dehydrogenase (NAD+) activity"/>
    <property type="evidence" value="ECO:0007669"/>
    <property type="project" value="InterPro"/>
</dbReference>
<dbReference type="GO" id="GO:0036397">
    <property type="term" value="F:formate dehydrogenase (quinone) activity"/>
    <property type="evidence" value="ECO:0000318"/>
    <property type="project" value="GO_Central"/>
</dbReference>
<dbReference type="GO" id="GO:0046872">
    <property type="term" value="F:metal ion binding"/>
    <property type="evidence" value="ECO:0007669"/>
    <property type="project" value="UniProtKB-KW"/>
</dbReference>
<dbReference type="GO" id="GO:0019645">
    <property type="term" value="P:anaerobic electron transport chain"/>
    <property type="evidence" value="ECO:0000303"/>
    <property type="project" value="ComplexPortal"/>
</dbReference>
<dbReference type="GO" id="GO:0009061">
    <property type="term" value="P:anaerobic respiration"/>
    <property type="evidence" value="ECO:0000269"/>
    <property type="project" value="EcoCyc"/>
</dbReference>
<dbReference type="GO" id="GO:0045333">
    <property type="term" value="P:cellular respiration"/>
    <property type="evidence" value="ECO:0000270"/>
    <property type="project" value="EcoCyc"/>
</dbReference>
<dbReference type="GO" id="GO:0006974">
    <property type="term" value="P:DNA damage response"/>
    <property type="evidence" value="ECO:0000270"/>
    <property type="project" value="EcoliWiki"/>
</dbReference>
<dbReference type="GO" id="GO:0015944">
    <property type="term" value="P:formate oxidation"/>
    <property type="evidence" value="ECO:0000314"/>
    <property type="project" value="EcoCyc"/>
</dbReference>
<dbReference type="GO" id="GO:0006788">
    <property type="term" value="P:heme oxidation"/>
    <property type="evidence" value="ECO:0000303"/>
    <property type="project" value="ComplexPortal"/>
</dbReference>
<dbReference type="FunFam" id="1.20.950.20:FF:000002">
    <property type="entry name" value="Formate dehydrogenase cytochrome b556 subunit"/>
    <property type="match status" value="1"/>
</dbReference>
<dbReference type="Gene3D" id="1.20.950.20">
    <property type="entry name" value="Transmembrane di-heme cytochromes, Chain C"/>
    <property type="match status" value="1"/>
</dbReference>
<dbReference type="InterPro" id="IPR011577">
    <property type="entry name" value="Cyt_b561_bac/Ni-Hgenase"/>
</dbReference>
<dbReference type="InterPro" id="IPR016174">
    <property type="entry name" value="Di-haem_cyt_TM"/>
</dbReference>
<dbReference type="InterPro" id="IPR051817">
    <property type="entry name" value="FDH_cytochrome_b556_subunit"/>
</dbReference>
<dbReference type="InterPro" id="IPR006471">
    <property type="entry name" value="Formate_DH_gsu"/>
</dbReference>
<dbReference type="NCBIfam" id="TIGR01583">
    <property type="entry name" value="formate-DH-gamm"/>
    <property type="match status" value="1"/>
</dbReference>
<dbReference type="NCBIfam" id="NF007924">
    <property type="entry name" value="PRK10639.1"/>
    <property type="match status" value="1"/>
</dbReference>
<dbReference type="PANTHER" id="PTHR30074:SF2">
    <property type="entry name" value="FORMATE DEHYDROGENASE, CYTOCHROME B556(FDO) SUBUNIT"/>
    <property type="match status" value="1"/>
</dbReference>
<dbReference type="PANTHER" id="PTHR30074">
    <property type="entry name" value="FORMATE DEHYDROGENASE, NITRATE-INDUCIBLE, CYTOCHROME B556 FDN SUBUNIT"/>
    <property type="match status" value="1"/>
</dbReference>
<dbReference type="Pfam" id="PF01292">
    <property type="entry name" value="Ni_hydr_CYTB"/>
    <property type="match status" value="1"/>
</dbReference>
<dbReference type="SUPFAM" id="SSF81342">
    <property type="entry name" value="Transmembrane di-heme cytochromes"/>
    <property type="match status" value="1"/>
</dbReference>
<sequence>MKRRDTIVRYTAPERINHWITAFCFILAAVSGLGFLFPSFNWLMQIMGTPQLARILHPFVGVVMFASFIIMFFRYWHHNLINRDDIFWAKNIRKIVVNEEVGDTGRYNFGQKCVFWAAIIFLVLLLVSGVIIWRPYFAPAFSIPVIRFALMLHSFAAVALIVVIMVHIYAALWVKGTITAMVEGWVTSAWAKKHHPRWYREVRKTTEKKAE</sequence>
<evidence type="ECO:0000250" key="1"/>
<evidence type="ECO:0000305" key="2"/>
<protein>
    <recommendedName>
        <fullName>Formate dehydrogenase, cytochrome b556(fdo) subunit</fullName>
    </recommendedName>
    <alternativeName>
        <fullName>Aerobic formate dehydrogenase cytochrome b556 subunit</fullName>
    </alternativeName>
    <alternativeName>
        <fullName>FDH-Z subunit gamma</fullName>
    </alternativeName>
    <alternativeName>
        <fullName>Formate dehydrogenase-O subunit gamma</fullName>
    </alternativeName>
</protein>
<name>FDOI_ECOLI</name>
<comment type="function">
    <text>Allows to use formate as major electron donor during aerobic respiration. Subunit gamma is probably the cytochrome b556(FDO) component of the formate dehydrogenase.</text>
</comment>
<comment type="cofactor">
    <cofactor evidence="1">
        <name>heme</name>
        <dbReference type="ChEBI" id="CHEBI:30413"/>
    </cofactor>
    <text evidence="1">Binds 2 heme groups per subunit. Heme 1 is located at the cytoplasmic interface, heme 2 is located at the periplasmic interface. Electrons are transferred from the periplasmic to the cytoplasmic heme.</text>
</comment>
<comment type="subunit">
    <text>Formate dehydrogenase is a membrane-bound complex, formed by subunits alpha, beta and gamma.</text>
</comment>
<comment type="subcellular location">
    <subcellularLocation>
        <location>Cell inner membrane</location>
        <topology>Multi-pass membrane protein</topology>
    </subcellularLocation>
</comment>
<comment type="similarity">
    <text evidence="2">Belongs to the formate dehydrogenase gamma subunit family.</text>
</comment>
<feature type="chain" id="PRO_0000087213" description="Formate dehydrogenase, cytochrome b556(fdo) subunit">
    <location>
        <begin position="1"/>
        <end position="211"/>
    </location>
</feature>
<feature type="topological domain" description="Cytoplasmic" evidence="2">
    <location>
        <begin position="1"/>
        <end position="17"/>
    </location>
</feature>
<feature type="transmembrane region" description="Helical" evidence="2">
    <location>
        <begin position="18"/>
        <end position="32"/>
    </location>
</feature>
<feature type="topological domain" description="Periplasmic" evidence="2">
    <location>
        <begin position="33"/>
        <end position="53"/>
    </location>
</feature>
<feature type="transmembrane region" description="Helical" evidence="2">
    <location>
        <begin position="54"/>
        <end position="72"/>
    </location>
</feature>
<feature type="topological domain" description="Cytoplasmic" evidence="2">
    <location>
        <begin position="73"/>
        <end position="112"/>
    </location>
</feature>
<feature type="transmembrane region" description="Helical" evidence="2">
    <location>
        <begin position="113"/>
        <end position="130"/>
    </location>
</feature>
<feature type="topological domain" description="Periplasmic" evidence="2">
    <location>
        <begin position="131"/>
        <end position="151"/>
    </location>
</feature>
<feature type="transmembrane region" description="Helical" evidence="2">
    <location>
        <begin position="152"/>
        <end position="170"/>
    </location>
</feature>
<feature type="topological domain" description="Cytoplasmic" evidence="2">
    <location>
        <begin position="171"/>
        <end position="211"/>
    </location>
</feature>
<feature type="binding site" description="axial binding residue" evidence="1">
    <location>
        <position position="18"/>
    </location>
    <ligand>
        <name>heme b</name>
        <dbReference type="ChEBI" id="CHEBI:60344"/>
        <label>1</label>
    </ligand>
    <ligandPart>
        <name>Fe</name>
        <dbReference type="ChEBI" id="CHEBI:18248"/>
    </ligandPart>
</feature>
<feature type="binding site" description="axial binding residue" evidence="1">
    <location>
        <position position="57"/>
    </location>
    <ligand>
        <name>heme b</name>
        <dbReference type="ChEBI" id="CHEBI:60344"/>
        <label>2</label>
    </ligand>
    <ligandPart>
        <name>Fe</name>
        <dbReference type="ChEBI" id="CHEBI:18248"/>
    </ligandPart>
</feature>
<feature type="binding site" description="axial binding residue" evidence="1">
    <location>
        <position position="153"/>
    </location>
    <ligand>
        <name>heme b</name>
        <dbReference type="ChEBI" id="CHEBI:60344"/>
        <label>2</label>
    </ligand>
    <ligandPart>
        <name>Fe</name>
        <dbReference type="ChEBI" id="CHEBI:18248"/>
    </ligandPart>
</feature>
<feature type="binding site" description="axial binding residue" evidence="1">
    <location>
        <position position="167"/>
    </location>
    <ligand>
        <name>heme b</name>
        <dbReference type="ChEBI" id="CHEBI:60344"/>
        <label>1</label>
    </ligand>
    <ligandPart>
        <name>Fe</name>
        <dbReference type="ChEBI" id="CHEBI:18248"/>
    </ligandPart>
</feature>
<reference key="1">
    <citation type="journal article" date="1993" name="Nucleic Acids Res.">
        <title>Analysis of the Escherichia coli genome. III. DNA sequence of the region from 87.2 to 89.2 minutes.</title>
        <authorList>
            <person name="Plunkett G. III"/>
            <person name="Burland V."/>
            <person name="Daniels D.L."/>
            <person name="Blattner F.R."/>
        </authorList>
    </citation>
    <scope>NUCLEOTIDE SEQUENCE [LARGE SCALE GENOMIC DNA]</scope>
    <source>
        <strain>K12 / MG1655 / ATCC 47076</strain>
    </source>
</reference>
<reference key="2">
    <citation type="journal article" date="1997" name="Science">
        <title>The complete genome sequence of Escherichia coli K-12.</title>
        <authorList>
            <person name="Blattner F.R."/>
            <person name="Plunkett G. III"/>
            <person name="Bloch C.A."/>
            <person name="Perna N.T."/>
            <person name="Burland V."/>
            <person name="Riley M."/>
            <person name="Collado-Vides J."/>
            <person name="Glasner J.D."/>
            <person name="Rode C.K."/>
            <person name="Mayhew G.F."/>
            <person name="Gregor J."/>
            <person name="Davis N.W."/>
            <person name="Kirkpatrick H.A."/>
            <person name="Goeden M.A."/>
            <person name="Rose D.J."/>
            <person name="Mau B."/>
            <person name="Shao Y."/>
        </authorList>
    </citation>
    <scope>NUCLEOTIDE SEQUENCE [LARGE SCALE GENOMIC DNA]</scope>
    <source>
        <strain>K12 / MG1655 / ATCC 47076</strain>
    </source>
</reference>
<reference key="3">
    <citation type="journal article" date="2006" name="Mol. Syst. Biol.">
        <title>Highly accurate genome sequences of Escherichia coli K-12 strains MG1655 and W3110.</title>
        <authorList>
            <person name="Hayashi K."/>
            <person name="Morooka N."/>
            <person name="Yamamoto Y."/>
            <person name="Fujita K."/>
            <person name="Isono K."/>
            <person name="Choi S."/>
            <person name="Ohtsubo E."/>
            <person name="Baba T."/>
            <person name="Wanner B.L."/>
            <person name="Mori H."/>
            <person name="Horiuchi T."/>
        </authorList>
    </citation>
    <scope>NUCLEOTIDE SEQUENCE [LARGE SCALE GENOMIC DNA]</scope>
    <source>
        <strain>K12 / W3110 / ATCC 27325 / DSM 5911</strain>
    </source>
</reference>
<reference key="4">
    <citation type="journal article" date="1995" name="J. Bacteriol.">
        <title>Expression and characterization of the Escherichia coli fdo locus and a possible physiological role for aerobic formate dehydrogenase.</title>
        <authorList>
            <person name="Abaibou H."/>
            <person name="Pommier J."/>
            <person name="Giordano G."/>
            <person name="Mandrand-Berthelot M.-A."/>
        </authorList>
    </citation>
    <scope>CHARACTERIZATION</scope>
    <source>
        <strain>K12</strain>
    </source>
</reference>
<reference key="5">
    <citation type="journal article" date="1998" name="J. Bacteriol.">
        <title>Topological analysis of the aerobic membrane-bound formate dehydrogenase of Escherichia coli.</title>
        <authorList>
            <person name="Benoit S."/>
            <person name="Abaibou H."/>
            <person name="Mandrand-Berthelot M.-A."/>
        </authorList>
    </citation>
    <scope>TOPOLOGY</scope>
</reference>
<reference key="6">
    <citation type="journal article" date="2005" name="Science">
        <title>Global topology analysis of the Escherichia coli inner membrane proteome.</title>
        <authorList>
            <person name="Daley D.O."/>
            <person name="Rapp M."/>
            <person name="Granseth E."/>
            <person name="Melen K."/>
            <person name="Drew D."/>
            <person name="von Heijne G."/>
        </authorList>
    </citation>
    <scope>TOPOLOGY [LARGE SCALE ANALYSIS]</scope>
    <source>
        <strain>K12 / MG1655 / ATCC 47076</strain>
    </source>
</reference>
<accession>P0AEL0</accession>
<accession>P32174</accession>
<accession>Q2M8I9</accession>
<organism>
    <name type="scientific">Escherichia coli (strain K12)</name>
    <dbReference type="NCBI Taxonomy" id="83333"/>
    <lineage>
        <taxon>Bacteria</taxon>
        <taxon>Pseudomonadati</taxon>
        <taxon>Pseudomonadota</taxon>
        <taxon>Gammaproteobacteria</taxon>
        <taxon>Enterobacterales</taxon>
        <taxon>Enterobacteriaceae</taxon>
        <taxon>Escherichia</taxon>
    </lineage>
</organism>
<keyword id="KW-0997">Cell inner membrane</keyword>
<keyword id="KW-1003">Cell membrane</keyword>
<keyword id="KW-0249">Electron transport</keyword>
<keyword id="KW-0349">Heme</keyword>
<keyword id="KW-0408">Iron</keyword>
<keyword id="KW-0472">Membrane</keyword>
<keyword id="KW-0479">Metal-binding</keyword>
<keyword id="KW-1185">Reference proteome</keyword>
<keyword id="KW-0812">Transmembrane</keyword>
<keyword id="KW-1133">Transmembrane helix</keyword>
<keyword id="KW-0813">Transport</keyword>
<proteinExistence type="evidence at protein level"/>
<gene>
    <name type="primary">fdoI</name>
    <name type="ordered locus">b3892</name>
    <name type="ordered locus">JW3863</name>
</gene>